<protein>
    <recommendedName>
        <fullName evidence="1">Phosphoglycerate kinase</fullName>
        <ecNumber evidence="1">2.7.2.3</ecNumber>
    </recommendedName>
</protein>
<reference key="1">
    <citation type="journal article" date="2007" name="ISME J.">
        <title>Population level functional diversity in a microbial community revealed by comparative genomic and metagenomic analyses.</title>
        <authorList>
            <person name="Bhaya D."/>
            <person name="Grossman A.R."/>
            <person name="Steunou A.-S."/>
            <person name="Khuri N."/>
            <person name="Cohan F.M."/>
            <person name="Hamamura N."/>
            <person name="Melendrez M.C."/>
            <person name="Bateson M.M."/>
            <person name="Ward D.M."/>
            <person name="Heidelberg J.F."/>
        </authorList>
    </citation>
    <scope>NUCLEOTIDE SEQUENCE [LARGE SCALE GENOMIC DNA]</scope>
    <source>
        <strain>JA-2-3B'a(2-13)</strain>
    </source>
</reference>
<evidence type="ECO:0000255" key="1">
    <source>
        <dbReference type="HAMAP-Rule" id="MF_00145"/>
    </source>
</evidence>
<accession>Q2JKX6</accession>
<organism>
    <name type="scientific">Synechococcus sp. (strain JA-2-3B'a(2-13))</name>
    <name type="common">Cyanobacteria bacterium Yellowstone B-Prime</name>
    <dbReference type="NCBI Taxonomy" id="321332"/>
    <lineage>
        <taxon>Bacteria</taxon>
        <taxon>Bacillati</taxon>
        <taxon>Cyanobacteriota</taxon>
        <taxon>Cyanophyceae</taxon>
        <taxon>Synechococcales</taxon>
        <taxon>Synechococcaceae</taxon>
        <taxon>Synechococcus</taxon>
    </lineage>
</organism>
<dbReference type="EC" id="2.7.2.3" evidence="1"/>
<dbReference type="EMBL" id="CP000240">
    <property type="protein sequence ID" value="ABD02652.1"/>
    <property type="molecule type" value="Genomic_DNA"/>
</dbReference>
<dbReference type="RefSeq" id="WP_011433296.1">
    <property type="nucleotide sequence ID" value="NC_007776.1"/>
</dbReference>
<dbReference type="SMR" id="Q2JKX6"/>
<dbReference type="STRING" id="321332.CYB_1693"/>
<dbReference type="KEGG" id="cyb:CYB_1693"/>
<dbReference type="eggNOG" id="COG0126">
    <property type="taxonomic scope" value="Bacteria"/>
</dbReference>
<dbReference type="HOGENOM" id="CLU_025427_0_2_3"/>
<dbReference type="OrthoDB" id="9808460at2"/>
<dbReference type="UniPathway" id="UPA00109">
    <property type="reaction ID" value="UER00185"/>
</dbReference>
<dbReference type="Proteomes" id="UP000001938">
    <property type="component" value="Chromosome"/>
</dbReference>
<dbReference type="GO" id="GO:0005829">
    <property type="term" value="C:cytosol"/>
    <property type="evidence" value="ECO:0007669"/>
    <property type="project" value="TreeGrafter"/>
</dbReference>
<dbReference type="GO" id="GO:0043531">
    <property type="term" value="F:ADP binding"/>
    <property type="evidence" value="ECO:0007669"/>
    <property type="project" value="TreeGrafter"/>
</dbReference>
<dbReference type="GO" id="GO:0005524">
    <property type="term" value="F:ATP binding"/>
    <property type="evidence" value="ECO:0007669"/>
    <property type="project" value="UniProtKB-KW"/>
</dbReference>
<dbReference type="GO" id="GO:0004618">
    <property type="term" value="F:phosphoglycerate kinase activity"/>
    <property type="evidence" value="ECO:0007669"/>
    <property type="project" value="UniProtKB-UniRule"/>
</dbReference>
<dbReference type="GO" id="GO:0006094">
    <property type="term" value="P:gluconeogenesis"/>
    <property type="evidence" value="ECO:0007669"/>
    <property type="project" value="TreeGrafter"/>
</dbReference>
<dbReference type="GO" id="GO:0006096">
    <property type="term" value="P:glycolytic process"/>
    <property type="evidence" value="ECO:0007669"/>
    <property type="project" value="UniProtKB-UniRule"/>
</dbReference>
<dbReference type="CDD" id="cd00318">
    <property type="entry name" value="Phosphoglycerate_kinase"/>
    <property type="match status" value="1"/>
</dbReference>
<dbReference type="FunFam" id="3.40.50.1260:FF:000003">
    <property type="entry name" value="Phosphoglycerate kinase"/>
    <property type="match status" value="1"/>
</dbReference>
<dbReference type="FunFam" id="3.40.50.1260:FF:000006">
    <property type="entry name" value="Phosphoglycerate kinase"/>
    <property type="match status" value="1"/>
</dbReference>
<dbReference type="Gene3D" id="3.40.50.1260">
    <property type="entry name" value="Phosphoglycerate kinase, N-terminal domain"/>
    <property type="match status" value="2"/>
</dbReference>
<dbReference type="HAMAP" id="MF_00145">
    <property type="entry name" value="Phosphoglyc_kinase"/>
    <property type="match status" value="1"/>
</dbReference>
<dbReference type="InterPro" id="IPR001576">
    <property type="entry name" value="Phosphoglycerate_kinase"/>
</dbReference>
<dbReference type="InterPro" id="IPR015911">
    <property type="entry name" value="Phosphoglycerate_kinase_CS"/>
</dbReference>
<dbReference type="InterPro" id="IPR015824">
    <property type="entry name" value="Phosphoglycerate_kinase_N"/>
</dbReference>
<dbReference type="InterPro" id="IPR036043">
    <property type="entry name" value="Phosphoglycerate_kinase_sf"/>
</dbReference>
<dbReference type="PANTHER" id="PTHR11406">
    <property type="entry name" value="PHOSPHOGLYCERATE KINASE"/>
    <property type="match status" value="1"/>
</dbReference>
<dbReference type="PANTHER" id="PTHR11406:SF23">
    <property type="entry name" value="PHOSPHOGLYCERATE KINASE 1, CHLOROPLASTIC-RELATED"/>
    <property type="match status" value="1"/>
</dbReference>
<dbReference type="Pfam" id="PF00162">
    <property type="entry name" value="PGK"/>
    <property type="match status" value="1"/>
</dbReference>
<dbReference type="PIRSF" id="PIRSF000724">
    <property type="entry name" value="Pgk"/>
    <property type="match status" value="1"/>
</dbReference>
<dbReference type="PRINTS" id="PR00477">
    <property type="entry name" value="PHGLYCKINASE"/>
</dbReference>
<dbReference type="SUPFAM" id="SSF53748">
    <property type="entry name" value="Phosphoglycerate kinase"/>
    <property type="match status" value="1"/>
</dbReference>
<dbReference type="PROSITE" id="PS00111">
    <property type="entry name" value="PGLYCERATE_KINASE"/>
    <property type="match status" value="1"/>
</dbReference>
<proteinExistence type="inferred from homology"/>
<gene>
    <name evidence="1" type="primary">pgk</name>
    <name type="ordered locus">CYB_1693</name>
</gene>
<comment type="catalytic activity">
    <reaction evidence="1">
        <text>(2R)-3-phosphoglycerate + ATP = (2R)-3-phospho-glyceroyl phosphate + ADP</text>
        <dbReference type="Rhea" id="RHEA:14801"/>
        <dbReference type="ChEBI" id="CHEBI:30616"/>
        <dbReference type="ChEBI" id="CHEBI:57604"/>
        <dbReference type="ChEBI" id="CHEBI:58272"/>
        <dbReference type="ChEBI" id="CHEBI:456216"/>
        <dbReference type="EC" id="2.7.2.3"/>
    </reaction>
</comment>
<comment type="pathway">
    <text evidence="1">Carbohydrate degradation; glycolysis; pyruvate from D-glyceraldehyde 3-phosphate: step 2/5.</text>
</comment>
<comment type="subunit">
    <text evidence="1">Monomer.</text>
</comment>
<comment type="subcellular location">
    <subcellularLocation>
        <location evidence="1">Cytoplasm</location>
    </subcellularLocation>
</comment>
<comment type="similarity">
    <text evidence="1">Belongs to the phosphoglycerate kinase family.</text>
</comment>
<name>PGK_SYNJB</name>
<feature type="chain" id="PRO_1000058076" description="Phosphoglycerate kinase">
    <location>
        <begin position="1"/>
        <end position="412"/>
    </location>
</feature>
<feature type="binding site" evidence="1">
    <location>
        <begin position="26"/>
        <end position="28"/>
    </location>
    <ligand>
        <name>substrate</name>
    </ligand>
</feature>
<feature type="binding site" evidence="1">
    <location>
        <position position="42"/>
    </location>
    <ligand>
        <name>substrate</name>
    </ligand>
</feature>
<feature type="binding site" evidence="1">
    <location>
        <begin position="65"/>
        <end position="68"/>
    </location>
    <ligand>
        <name>substrate</name>
    </ligand>
</feature>
<feature type="binding site" evidence="1">
    <location>
        <position position="133"/>
    </location>
    <ligand>
        <name>substrate</name>
    </ligand>
</feature>
<feature type="binding site" evidence="1">
    <location>
        <position position="166"/>
    </location>
    <ligand>
        <name>substrate</name>
    </ligand>
</feature>
<feature type="binding site" evidence="1">
    <location>
        <position position="217"/>
    </location>
    <ligand>
        <name>ATP</name>
        <dbReference type="ChEBI" id="CHEBI:30616"/>
    </ligand>
</feature>
<feature type="binding site" evidence="1">
    <location>
        <position position="308"/>
    </location>
    <ligand>
        <name>ATP</name>
        <dbReference type="ChEBI" id="CHEBI:30616"/>
    </ligand>
</feature>
<feature type="binding site" evidence="1">
    <location>
        <position position="339"/>
    </location>
    <ligand>
        <name>ATP</name>
        <dbReference type="ChEBI" id="CHEBI:30616"/>
    </ligand>
</feature>
<feature type="binding site" evidence="1">
    <location>
        <begin position="368"/>
        <end position="371"/>
    </location>
    <ligand>
        <name>ATP</name>
        <dbReference type="ChEBI" id="CHEBI:30616"/>
    </ligand>
</feature>
<sequence length="412" mass="43532">MAKQTLGSLLSSGFDLAGKRVLVRADFNVPLDAQGNITDDTRIRAALPTVQALTQAGAKVILTSHLGRPVKKDKETGAVKVAREGNSLAPVATRLSQLLGQPVAFAPDCIGPEAEAVVNRLENGQVALLENVRFYPEEEDNDPEFARKLASLADLFVNDAFGSAHRAHASTAGVTAYLQPAVAGYLVERELQFLSGAIEDPRRPLAAIIGGSKVSTKIGVIERLLEKVDKLLLGGGMIFTFYQAQGIQTGKSLVETDKLDLARSLMEKAKERGVELLLPVDVVVADRFDKDAQAQTVSIHAIPEDWMGLDIGPESVKAFQSALQGCQTVVWNGPMGVFEFDRFALGTEAIARTLADLTQAGATTIIGGGDSVAAVEKVGLADKMTHISTGGGASLELLEGKVLPGIAALTEA</sequence>
<keyword id="KW-0067">ATP-binding</keyword>
<keyword id="KW-0963">Cytoplasm</keyword>
<keyword id="KW-0324">Glycolysis</keyword>
<keyword id="KW-0418">Kinase</keyword>
<keyword id="KW-0547">Nucleotide-binding</keyword>
<keyword id="KW-1185">Reference proteome</keyword>
<keyword id="KW-0808">Transferase</keyword>